<protein>
    <recommendedName>
        <fullName evidence="1">Nicotinate-nucleotide--dimethylbenzimidazole phosphoribosyltransferase</fullName>
        <shortName evidence="1">NN:DBI PRT</shortName>
        <ecNumber evidence="1">2.4.2.21</ecNumber>
    </recommendedName>
    <alternativeName>
        <fullName evidence="1">N(1)-alpha-phosphoribosyltransferase</fullName>
    </alternativeName>
</protein>
<comment type="function">
    <text evidence="1">Catalyzes the synthesis of alpha-ribazole-5'-phosphate from nicotinate mononucleotide (NAMN) and 5,6-dimethylbenzimidazole (DMB).</text>
</comment>
<comment type="catalytic activity">
    <reaction evidence="1">
        <text>5,6-dimethylbenzimidazole + nicotinate beta-D-ribonucleotide = alpha-ribazole 5'-phosphate + nicotinate + H(+)</text>
        <dbReference type="Rhea" id="RHEA:11196"/>
        <dbReference type="ChEBI" id="CHEBI:15378"/>
        <dbReference type="ChEBI" id="CHEBI:15890"/>
        <dbReference type="ChEBI" id="CHEBI:32544"/>
        <dbReference type="ChEBI" id="CHEBI:57502"/>
        <dbReference type="ChEBI" id="CHEBI:57918"/>
        <dbReference type="EC" id="2.4.2.21"/>
    </reaction>
</comment>
<comment type="pathway">
    <text evidence="1">Nucleoside biosynthesis; alpha-ribazole biosynthesis; alpha-ribazole from 5,6-dimethylbenzimidazole: step 1/2.</text>
</comment>
<comment type="similarity">
    <text evidence="1">Belongs to the CobT family.</text>
</comment>
<comment type="sequence caution" evidence="2">
    <conflict type="erroneous initiation">
        <sequence resource="EMBL-CDS" id="BAB99593"/>
    </conflict>
</comment>
<evidence type="ECO:0000255" key="1">
    <source>
        <dbReference type="HAMAP-Rule" id="MF_00230"/>
    </source>
</evidence>
<evidence type="ECO:0000305" key="2"/>
<dbReference type="EC" id="2.4.2.21" evidence="1"/>
<dbReference type="EMBL" id="BA000036">
    <property type="protein sequence ID" value="BAB99593.1"/>
    <property type="status" value="ALT_INIT"/>
    <property type="molecule type" value="Genomic_DNA"/>
</dbReference>
<dbReference type="EMBL" id="BX927154">
    <property type="protein sequence ID" value="CAF20541.1"/>
    <property type="molecule type" value="Genomic_DNA"/>
</dbReference>
<dbReference type="RefSeq" id="NP_601404.1">
    <property type="nucleotide sequence ID" value="NC_003450.3"/>
</dbReference>
<dbReference type="RefSeq" id="WP_011014954.1">
    <property type="nucleotide sequence ID" value="NC_006958.1"/>
</dbReference>
<dbReference type="SMR" id="Q8NNJ8"/>
<dbReference type="STRING" id="196627.cg2414"/>
<dbReference type="GeneID" id="1020152"/>
<dbReference type="KEGG" id="cgb:cg2414"/>
<dbReference type="KEGG" id="cgl:Cgl2200"/>
<dbReference type="PATRIC" id="fig|196627.13.peg.2136"/>
<dbReference type="eggNOG" id="COG2038">
    <property type="taxonomic scope" value="Bacteria"/>
</dbReference>
<dbReference type="HOGENOM" id="CLU_002982_0_2_11"/>
<dbReference type="OrthoDB" id="9781491at2"/>
<dbReference type="BioCyc" id="CORYNE:G18NG-11792-MONOMER"/>
<dbReference type="UniPathway" id="UPA00061">
    <property type="reaction ID" value="UER00516"/>
</dbReference>
<dbReference type="Proteomes" id="UP000000582">
    <property type="component" value="Chromosome"/>
</dbReference>
<dbReference type="Proteomes" id="UP000001009">
    <property type="component" value="Chromosome"/>
</dbReference>
<dbReference type="GO" id="GO:0008939">
    <property type="term" value="F:nicotinate-nucleotide-dimethylbenzimidazole phosphoribosyltransferase activity"/>
    <property type="evidence" value="ECO:0007669"/>
    <property type="project" value="UniProtKB-UniRule"/>
</dbReference>
<dbReference type="GO" id="GO:0009236">
    <property type="term" value="P:cobalamin biosynthetic process"/>
    <property type="evidence" value="ECO:0007669"/>
    <property type="project" value="UniProtKB-KW"/>
</dbReference>
<dbReference type="CDD" id="cd02439">
    <property type="entry name" value="DMB-PRT_CobT"/>
    <property type="match status" value="1"/>
</dbReference>
<dbReference type="Gene3D" id="1.10.1610.10">
    <property type="match status" value="1"/>
</dbReference>
<dbReference type="Gene3D" id="3.40.50.10210">
    <property type="match status" value="1"/>
</dbReference>
<dbReference type="HAMAP" id="MF_00230">
    <property type="entry name" value="CobT"/>
    <property type="match status" value="1"/>
</dbReference>
<dbReference type="InterPro" id="IPR003200">
    <property type="entry name" value="Nict_dMeBzImd_PRibTrfase"/>
</dbReference>
<dbReference type="InterPro" id="IPR017846">
    <property type="entry name" value="Nict_dMeBzImd_PRibTrfase_bact"/>
</dbReference>
<dbReference type="InterPro" id="IPR023195">
    <property type="entry name" value="Nict_dMeBzImd_PRibTrfase_N"/>
</dbReference>
<dbReference type="InterPro" id="IPR036087">
    <property type="entry name" value="Nict_dMeBzImd_PRibTrfase_sf"/>
</dbReference>
<dbReference type="NCBIfam" id="TIGR03160">
    <property type="entry name" value="cobT_DBIPRT"/>
    <property type="match status" value="1"/>
</dbReference>
<dbReference type="NCBIfam" id="NF000996">
    <property type="entry name" value="PRK00105.1"/>
    <property type="match status" value="1"/>
</dbReference>
<dbReference type="PANTHER" id="PTHR43463">
    <property type="entry name" value="NICOTINATE-NUCLEOTIDE--DIMETHYLBENZIMIDAZOLE PHOSPHORIBOSYLTRANSFERASE"/>
    <property type="match status" value="1"/>
</dbReference>
<dbReference type="PANTHER" id="PTHR43463:SF1">
    <property type="entry name" value="NICOTINATE-NUCLEOTIDE--DIMETHYLBENZIMIDAZOLE PHOSPHORIBOSYLTRANSFERASE"/>
    <property type="match status" value="1"/>
</dbReference>
<dbReference type="Pfam" id="PF02277">
    <property type="entry name" value="DBI_PRT"/>
    <property type="match status" value="1"/>
</dbReference>
<dbReference type="SUPFAM" id="SSF52733">
    <property type="entry name" value="Nicotinate mononucleotide:5,6-dimethylbenzimidazole phosphoribosyltransferase (CobT)"/>
    <property type="match status" value="1"/>
</dbReference>
<keyword id="KW-0169">Cobalamin biosynthesis</keyword>
<keyword id="KW-0328">Glycosyltransferase</keyword>
<keyword id="KW-1185">Reference proteome</keyword>
<keyword id="KW-0808">Transferase</keyword>
<organism>
    <name type="scientific">Corynebacterium glutamicum (strain ATCC 13032 / DSM 20300 / JCM 1318 / BCRC 11384 / CCUG 27702 / LMG 3730 / NBRC 12168 / NCIMB 10025 / NRRL B-2784 / 534)</name>
    <dbReference type="NCBI Taxonomy" id="196627"/>
    <lineage>
        <taxon>Bacteria</taxon>
        <taxon>Bacillati</taxon>
        <taxon>Actinomycetota</taxon>
        <taxon>Actinomycetes</taxon>
        <taxon>Mycobacteriales</taxon>
        <taxon>Corynebacteriaceae</taxon>
        <taxon>Corynebacterium</taxon>
    </lineage>
</organism>
<sequence length="358" mass="37444">MVPAELFARVEFPDHKILAQTKDFHDSLTKPPGSLGKLEQIGCFISACQGQIPPRPLNNSKIVVFAGDHGVATKGVSAYPSSVSLQMAENITNGGAAINVIARTTGTSVRLIDTSLDHEAWGDERVSRSCGSIDVEDAMTQEQVERALKIGKRIADQEVDAGADILIPGDLGIGNTTTAAALVGTFTLAEPVVVVGRGTGIDDEAWKLKVSAIRDAMFRARDLRQDPIAIARKISSPDLAAMAAFIAQAAVRRTPVLLDGVVVTAAALLANKLAPGARRWFIAGHRSTEPAHSVALNALALDPILELGMSLGEGSGAATALPLVKIAVDLMNDMSTFSSAGVDGPLNASSEAPEQNTE</sequence>
<proteinExistence type="inferred from homology"/>
<accession>Q8NNJ8</accession>
<gene>
    <name evidence="1" type="primary">cobT</name>
    <name type="ordered locus">Cgl2200</name>
    <name type="ordered locus">cg2414</name>
</gene>
<name>COBT_CORGL</name>
<reference key="1">
    <citation type="journal article" date="2003" name="Appl. Microbiol. Biotechnol.">
        <title>The Corynebacterium glutamicum genome: features and impacts on biotechnological processes.</title>
        <authorList>
            <person name="Ikeda M."/>
            <person name="Nakagawa S."/>
        </authorList>
    </citation>
    <scope>NUCLEOTIDE SEQUENCE [LARGE SCALE GENOMIC DNA]</scope>
    <source>
        <strain>ATCC 13032 / DSM 20300 / JCM 1318 / BCRC 11384 / CCUG 27702 / LMG 3730 / NBRC 12168 / NCIMB 10025 / NRRL B-2784 / 534</strain>
    </source>
</reference>
<reference key="2">
    <citation type="journal article" date="2003" name="J. Biotechnol.">
        <title>The complete Corynebacterium glutamicum ATCC 13032 genome sequence and its impact on the production of L-aspartate-derived amino acids and vitamins.</title>
        <authorList>
            <person name="Kalinowski J."/>
            <person name="Bathe B."/>
            <person name="Bartels D."/>
            <person name="Bischoff N."/>
            <person name="Bott M."/>
            <person name="Burkovski A."/>
            <person name="Dusch N."/>
            <person name="Eggeling L."/>
            <person name="Eikmanns B.J."/>
            <person name="Gaigalat L."/>
            <person name="Goesmann A."/>
            <person name="Hartmann M."/>
            <person name="Huthmacher K."/>
            <person name="Kraemer R."/>
            <person name="Linke B."/>
            <person name="McHardy A.C."/>
            <person name="Meyer F."/>
            <person name="Moeckel B."/>
            <person name="Pfefferle W."/>
            <person name="Puehler A."/>
            <person name="Rey D.A."/>
            <person name="Rueckert C."/>
            <person name="Rupp O."/>
            <person name="Sahm H."/>
            <person name="Wendisch V.F."/>
            <person name="Wiegraebe I."/>
            <person name="Tauch A."/>
        </authorList>
    </citation>
    <scope>NUCLEOTIDE SEQUENCE [LARGE SCALE GENOMIC DNA]</scope>
    <source>
        <strain>ATCC 13032 / DSM 20300 / JCM 1318 / BCRC 11384 / CCUG 27702 / LMG 3730 / NBRC 12168 / NCIMB 10025 / NRRL B-2784 / 534</strain>
    </source>
</reference>
<feature type="chain" id="PRO_0000167046" description="Nicotinate-nucleotide--dimethylbenzimidazole phosphoribosyltransferase">
    <location>
        <begin position="1"/>
        <end position="358"/>
    </location>
</feature>
<feature type="active site" description="Proton acceptor" evidence="1">
    <location>
        <position position="313"/>
    </location>
</feature>